<sequence length="114" mass="13575">MLYINSFLDRMGEIIRGEKSVEEADKLLDQKNIFEMFRSDCEEILNLYKSGKAEKEEVQRNFYLLKTYVVSQLSIHFERLKEFAESKGFKIEKKLDPEVINEIALYIDRVEKEV</sequence>
<keyword id="KW-0002">3D-structure</keyword>
<keyword id="KW-1185">Reference proteome</keyword>
<accession>O29321</accession>
<protein>
    <recommendedName>
        <fullName>Uncharacterized protein AF_0941</fullName>
    </recommendedName>
</protein>
<dbReference type="EMBL" id="AE000782">
    <property type="protein sequence ID" value="AAB90315.1"/>
    <property type="molecule type" value="Genomic_DNA"/>
</dbReference>
<dbReference type="PIR" id="E69367">
    <property type="entry name" value="E69367"/>
</dbReference>
<dbReference type="RefSeq" id="WP_010878441.1">
    <property type="nucleotide sequence ID" value="NC_000917.1"/>
</dbReference>
<dbReference type="PDB" id="1YOZ">
    <property type="method" value="X-ray"/>
    <property type="resolution" value="2.00 A"/>
    <property type="chains" value="A/B=1-114"/>
</dbReference>
<dbReference type="PDBsum" id="1YOZ"/>
<dbReference type="SMR" id="O29321"/>
<dbReference type="STRING" id="224325.AF_0941"/>
<dbReference type="PaxDb" id="224325-AF_0941"/>
<dbReference type="EnsemblBacteria" id="AAB90315">
    <property type="protein sequence ID" value="AAB90315"/>
    <property type="gene ID" value="AF_0941"/>
</dbReference>
<dbReference type="KEGG" id="afu:AF_0941"/>
<dbReference type="eggNOG" id="arCOG10390">
    <property type="taxonomic scope" value="Archaea"/>
</dbReference>
<dbReference type="HOGENOM" id="CLU_1954540_0_0_2"/>
<dbReference type="EvolutionaryTrace" id="O29321"/>
<dbReference type="Proteomes" id="UP000002199">
    <property type="component" value="Chromosome"/>
</dbReference>
<dbReference type="Gene3D" id="1.10.3200.10">
    <property type="entry name" value="AF0941-like"/>
    <property type="match status" value="1"/>
</dbReference>
<dbReference type="InterPro" id="IPR036564">
    <property type="entry name" value="AF0941-like_sf"/>
</dbReference>
<dbReference type="InterPro" id="IPR013502">
    <property type="entry name" value="Uncharacterised_AF0941"/>
</dbReference>
<dbReference type="Pfam" id="PF14591">
    <property type="entry name" value="AF0941-like"/>
    <property type="match status" value="1"/>
</dbReference>
<dbReference type="SUPFAM" id="SSF140726">
    <property type="entry name" value="AF0941-like"/>
    <property type="match status" value="1"/>
</dbReference>
<organism>
    <name type="scientific">Archaeoglobus fulgidus (strain ATCC 49558 / DSM 4304 / JCM 9628 / NBRC 100126 / VC-16)</name>
    <dbReference type="NCBI Taxonomy" id="224325"/>
    <lineage>
        <taxon>Archaea</taxon>
        <taxon>Methanobacteriati</taxon>
        <taxon>Methanobacteriota</taxon>
        <taxon>Archaeoglobi</taxon>
        <taxon>Archaeoglobales</taxon>
        <taxon>Archaeoglobaceae</taxon>
        <taxon>Archaeoglobus</taxon>
    </lineage>
</organism>
<name>Y941_ARCFU</name>
<feature type="chain" id="PRO_0000127947" description="Uncharacterized protein AF_0941">
    <location>
        <begin position="1"/>
        <end position="114"/>
    </location>
</feature>
<feature type="helix" evidence="1">
    <location>
        <begin position="6"/>
        <end position="15"/>
    </location>
</feature>
<feature type="helix" evidence="1">
    <location>
        <begin position="21"/>
        <end position="23"/>
    </location>
</feature>
<feature type="helix" evidence="1">
    <location>
        <begin position="24"/>
        <end position="27"/>
    </location>
</feature>
<feature type="helix" evidence="1">
    <location>
        <begin position="30"/>
        <end position="49"/>
    </location>
</feature>
<feature type="helix" evidence="1">
    <location>
        <begin position="55"/>
        <end position="71"/>
    </location>
</feature>
<feature type="helix" evidence="1">
    <location>
        <begin position="73"/>
        <end position="85"/>
    </location>
</feature>
<feature type="helix" evidence="1">
    <location>
        <begin position="97"/>
        <end position="112"/>
    </location>
</feature>
<reference key="1">
    <citation type="journal article" date="1997" name="Nature">
        <title>The complete genome sequence of the hyperthermophilic, sulphate-reducing archaeon Archaeoglobus fulgidus.</title>
        <authorList>
            <person name="Klenk H.-P."/>
            <person name="Clayton R.A."/>
            <person name="Tomb J.-F."/>
            <person name="White O."/>
            <person name="Nelson K.E."/>
            <person name="Ketchum K.A."/>
            <person name="Dodson R.J."/>
            <person name="Gwinn M.L."/>
            <person name="Hickey E.K."/>
            <person name="Peterson J.D."/>
            <person name="Richardson D.L."/>
            <person name="Kerlavage A.R."/>
            <person name="Graham D.E."/>
            <person name="Kyrpides N.C."/>
            <person name="Fleischmann R.D."/>
            <person name="Quackenbush J."/>
            <person name="Lee N.H."/>
            <person name="Sutton G.G."/>
            <person name="Gill S.R."/>
            <person name="Kirkness E.F."/>
            <person name="Dougherty B.A."/>
            <person name="McKenney K."/>
            <person name="Adams M.D."/>
            <person name="Loftus B.J."/>
            <person name="Peterson S.N."/>
            <person name="Reich C.I."/>
            <person name="McNeil L.K."/>
            <person name="Badger J.H."/>
            <person name="Glodek A."/>
            <person name="Zhou L."/>
            <person name="Overbeek R."/>
            <person name="Gocayne J.D."/>
            <person name="Weidman J.F."/>
            <person name="McDonald L.A."/>
            <person name="Utterback T.R."/>
            <person name="Cotton M.D."/>
            <person name="Spriggs T."/>
            <person name="Artiach P."/>
            <person name="Kaine B.P."/>
            <person name="Sykes S.M."/>
            <person name="Sadow P.W."/>
            <person name="D'Andrea K.P."/>
            <person name="Bowman C."/>
            <person name="Fujii C."/>
            <person name="Garland S.A."/>
            <person name="Mason T.M."/>
            <person name="Olsen G.J."/>
            <person name="Fraser C.M."/>
            <person name="Smith H.O."/>
            <person name="Woese C.R."/>
            <person name="Venter J.C."/>
        </authorList>
    </citation>
    <scope>NUCLEOTIDE SEQUENCE [LARGE SCALE GENOMIC DNA]</scope>
    <source>
        <strain>ATCC 49558 / DSM 4304 / JCM 9628 / NBRC 100126 / VC-16</strain>
    </source>
</reference>
<gene>
    <name type="ordered locus">AF_0941</name>
</gene>
<proteinExistence type="evidence at protein level"/>
<evidence type="ECO:0007829" key="1">
    <source>
        <dbReference type="PDB" id="1YOZ"/>
    </source>
</evidence>